<sequence>MEKIKKSYLLVAKLKFKYFCLKPYSLNSTTKFILKIIKNKSMLIFN</sequence>
<geneLocation type="chloroplast"/>
<dbReference type="EMBL" id="Z67753">
    <property type="protein sequence ID" value="CAA91616.1"/>
    <property type="molecule type" value="Genomic_DNA"/>
</dbReference>
<dbReference type="PIR" id="S78243">
    <property type="entry name" value="S78243"/>
</dbReference>
<dbReference type="RefSeq" id="NP_043584.1">
    <property type="nucleotide sequence ID" value="NC_001713.1"/>
</dbReference>
<dbReference type="SMR" id="P49828"/>
<dbReference type="GeneID" id="6435136"/>
<dbReference type="GO" id="GO:0009507">
    <property type="term" value="C:chloroplast"/>
    <property type="evidence" value="ECO:0007669"/>
    <property type="project" value="UniProtKB-SubCell"/>
</dbReference>
<accession>P49828</accession>
<comment type="subcellular location">
    <subcellularLocation>
        <location>Plastid</location>
        <location>Chloroplast</location>
    </subcellularLocation>
</comment>
<feature type="chain" id="PRO_0000217454" description="Uncharacterized 5.5 kDa protein in ccsA-rps6 intergenic region">
    <location>
        <begin position="1"/>
        <end position="46"/>
    </location>
</feature>
<name>YCX2_TRICV</name>
<reference key="1">
    <citation type="journal article" date="1995" name="Plant Mol. Biol. Rep.">
        <title>The chloroplast genome of a chlorophyll a+c-containing alga, Odontella sinensis.</title>
        <authorList>
            <person name="Kowallik K.V."/>
            <person name="Stoebe B."/>
            <person name="Schaffran I."/>
            <person name="Kroth-Pancic P."/>
            <person name="Freier U."/>
        </authorList>
    </citation>
    <scope>NUCLEOTIDE SEQUENCE [LARGE SCALE GENOMIC DNA]</scope>
</reference>
<keyword id="KW-0150">Chloroplast</keyword>
<keyword id="KW-0934">Plastid</keyword>
<protein>
    <recommendedName>
        <fullName>Uncharacterized 5.5 kDa protein in ccsA-rps6 intergenic region</fullName>
    </recommendedName>
    <alternativeName>
        <fullName>ORF46</fullName>
    </alternativeName>
</protein>
<organism>
    <name type="scientific">Trieres chinensis</name>
    <name type="common">Marine centric diatom</name>
    <name type="synonym">Odontella sinensis</name>
    <dbReference type="NCBI Taxonomy" id="1514140"/>
    <lineage>
        <taxon>Eukaryota</taxon>
        <taxon>Sar</taxon>
        <taxon>Stramenopiles</taxon>
        <taxon>Ochrophyta</taxon>
        <taxon>Bacillariophyta</taxon>
        <taxon>Mediophyceae</taxon>
        <taxon>Biddulphiophycidae</taxon>
        <taxon>Eupodiscales</taxon>
        <taxon>Parodontellaceae</taxon>
        <taxon>Trieres</taxon>
    </lineage>
</organism>
<proteinExistence type="predicted"/>